<sequence length="174" mass="20493">MIKSQVGRRYSKAIFEIAEEKKQVKEIYEMLNSAMVLYRTDKEFKHFILNPLIDNEQKKSVLNEIFGKDNSENLNILLYILDKGRMNCIKYIVAEYLKIYYRKNRILDVKATFTKELTDEQKKKLIDKLSQKTGKEINLEIKIDKDILGGGIIKIGDKIIDGSIRRELDNWRKS</sequence>
<feature type="chain" id="PRO_1000184721" description="ATP synthase subunit delta">
    <location>
        <begin position="1"/>
        <end position="174"/>
    </location>
</feature>
<dbReference type="EMBL" id="AE009951">
    <property type="protein sequence ID" value="AAL94564.1"/>
    <property type="molecule type" value="Genomic_DNA"/>
</dbReference>
<dbReference type="RefSeq" id="NP_603265.1">
    <property type="nucleotide sequence ID" value="NC_003454.1"/>
</dbReference>
<dbReference type="RefSeq" id="WP_011016338.1">
    <property type="nucleotide sequence ID" value="NZ_CP028101.1"/>
</dbReference>
<dbReference type="SMR" id="Q8RGD9"/>
<dbReference type="DIP" id="DIP-60177N"/>
<dbReference type="FunCoup" id="Q8RGD9">
    <property type="interactions" value="358"/>
</dbReference>
<dbReference type="IntAct" id="Q8RGD9">
    <property type="interactions" value="1"/>
</dbReference>
<dbReference type="STRING" id="190304.FN0361"/>
<dbReference type="PaxDb" id="190304-FN0361"/>
<dbReference type="EnsemblBacteria" id="AAL94564">
    <property type="protein sequence ID" value="AAL94564"/>
    <property type="gene ID" value="FN0361"/>
</dbReference>
<dbReference type="GeneID" id="79783370"/>
<dbReference type="KEGG" id="fnu:FN0361"/>
<dbReference type="PATRIC" id="fig|190304.8.peg.938"/>
<dbReference type="eggNOG" id="COG0712">
    <property type="taxonomic scope" value="Bacteria"/>
</dbReference>
<dbReference type="HOGENOM" id="CLU_085114_4_0_0"/>
<dbReference type="InParanoid" id="Q8RGD9"/>
<dbReference type="BioCyc" id="FNUC190304:G1FZS-958-MONOMER"/>
<dbReference type="Proteomes" id="UP000002521">
    <property type="component" value="Chromosome"/>
</dbReference>
<dbReference type="GO" id="GO:0005886">
    <property type="term" value="C:plasma membrane"/>
    <property type="evidence" value="ECO:0007669"/>
    <property type="project" value="UniProtKB-SubCell"/>
</dbReference>
<dbReference type="GO" id="GO:0045259">
    <property type="term" value="C:proton-transporting ATP synthase complex"/>
    <property type="evidence" value="ECO:0007669"/>
    <property type="project" value="UniProtKB-KW"/>
</dbReference>
<dbReference type="GO" id="GO:0046933">
    <property type="term" value="F:proton-transporting ATP synthase activity, rotational mechanism"/>
    <property type="evidence" value="ECO:0007669"/>
    <property type="project" value="UniProtKB-UniRule"/>
</dbReference>
<dbReference type="GO" id="GO:0015986">
    <property type="term" value="P:proton motive force-driven ATP synthesis"/>
    <property type="evidence" value="ECO:0000318"/>
    <property type="project" value="GO_Central"/>
</dbReference>
<dbReference type="Gene3D" id="1.10.520.20">
    <property type="entry name" value="N-terminal domain of the delta subunit of the F1F0-ATP synthase"/>
    <property type="match status" value="1"/>
</dbReference>
<dbReference type="HAMAP" id="MF_01416">
    <property type="entry name" value="ATP_synth_delta_bact"/>
    <property type="match status" value="1"/>
</dbReference>
<dbReference type="InterPro" id="IPR026015">
    <property type="entry name" value="ATP_synth_OSCP/delta_N_sf"/>
</dbReference>
<dbReference type="InterPro" id="IPR020781">
    <property type="entry name" value="ATPase_OSCP/d_CS"/>
</dbReference>
<dbReference type="InterPro" id="IPR000711">
    <property type="entry name" value="ATPase_OSCP/dsu"/>
</dbReference>
<dbReference type="NCBIfam" id="TIGR01145">
    <property type="entry name" value="ATP_synt_delta"/>
    <property type="match status" value="1"/>
</dbReference>
<dbReference type="PANTHER" id="PTHR11910">
    <property type="entry name" value="ATP SYNTHASE DELTA CHAIN"/>
    <property type="match status" value="1"/>
</dbReference>
<dbReference type="Pfam" id="PF00213">
    <property type="entry name" value="OSCP"/>
    <property type="match status" value="1"/>
</dbReference>
<dbReference type="PRINTS" id="PR00125">
    <property type="entry name" value="ATPASEDELTA"/>
</dbReference>
<dbReference type="SUPFAM" id="SSF47928">
    <property type="entry name" value="N-terminal domain of the delta subunit of the F1F0-ATP synthase"/>
    <property type="match status" value="1"/>
</dbReference>
<dbReference type="PROSITE" id="PS00389">
    <property type="entry name" value="ATPASE_DELTA"/>
    <property type="match status" value="1"/>
</dbReference>
<comment type="function">
    <text evidence="1">F(1)F(0) ATP synthase produces ATP from ADP in the presence of a proton or sodium gradient. F-type ATPases consist of two structural domains, F(1) containing the extramembraneous catalytic core and F(0) containing the membrane proton channel, linked together by a central stalk and a peripheral stalk. During catalysis, ATP synthesis in the catalytic domain of F(1) is coupled via a rotary mechanism of the central stalk subunits to proton translocation.</text>
</comment>
<comment type="function">
    <text evidence="1">This protein is part of the stalk that links CF(0) to CF(1). It either transmits conformational changes from CF(0) to CF(1) or is implicated in proton conduction.</text>
</comment>
<comment type="subunit">
    <text evidence="1">F-type ATPases have 2 components, F(1) - the catalytic core - and F(0) - the membrane proton channel. F(1) has five subunits: alpha(3), beta(3), gamma(1), delta(1), epsilon(1). F(0) has three main subunits: a(1), b(2) and c(10-14). The alpha and beta chains form an alternating ring which encloses part of the gamma chain. F(1) is attached to F(0) by a central stalk formed by the gamma and epsilon chains, while a peripheral stalk is formed by the delta and b chains.</text>
</comment>
<comment type="subcellular location">
    <subcellularLocation>
        <location evidence="1">Cell inner membrane</location>
        <topology evidence="1">Peripheral membrane protein</topology>
    </subcellularLocation>
</comment>
<comment type="similarity">
    <text evidence="1">Belongs to the ATPase delta chain family.</text>
</comment>
<protein>
    <recommendedName>
        <fullName evidence="1">ATP synthase subunit delta</fullName>
    </recommendedName>
    <alternativeName>
        <fullName evidence="1">ATP synthase F(1) sector subunit delta</fullName>
    </alternativeName>
    <alternativeName>
        <fullName evidence="1">F-type ATPase subunit delta</fullName>
        <shortName evidence="1">F-ATPase subunit delta</shortName>
    </alternativeName>
</protein>
<accession>Q8RGD9</accession>
<reference key="1">
    <citation type="journal article" date="2002" name="J. Bacteriol.">
        <title>Genome sequence and analysis of the oral bacterium Fusobacterium nucleatum strain ATCC 25586.</title>
        <authorList>
            <person name="Kapatral V."/>
            <person name="Anderson I."/>
            <person name="Ivanova N."/>
            <person name="Reznik G."/>
            <person name="Los T."/>
            <person name="Lykidis A."/>
            <person name="Bhattacharyya A."/>
            <person name="Bartman A."/>
            <person name="Gardner W."/>
            <person name="Grechkin G."/>
            <person name="Zhu L."/>
            <person name="Vasieva O."/>
            <person name="Chu L."/>
            <person name="Kogan Y."/>
            <person name="Chaga O."/>
            <person name="Goltsman E."/>
            <person name="Bernal A."/>
            <person name="Larsen N."/>
            <person name="D'Souza M."/>
            <person name="Walunas T."/>
            <person name="Pusch G."/>
            <person name="Haselkorn R."/>
            <person name="Fonstein M."/>
            <person name="Kyrpides N.C."/>
            <person name="Overbeek R."/>
        </authorList>
    </citation>
    <scope>NUCLEOTIDE SEQUENCE [LARGE SCALE GENOMIC DNA]</scope>
    <source>
        <strain>ATCC 25586 / DSM 15643 / BCRC 10681 / CIP 101130 / JCM 8532 / KCTC 2640 / LMG 13131 / VPI 4355</strain>
    </source>
</reference>
<organism>
    <name type="scientific">Fusobacterium nucleatum subsp. nucleatum (strain ATCC 25586 / DSM 15643 / BCRC 10681 / CIP 101130 / JCM 8532 / KCTC 2640 / LMG 13131 / VPI 4355)</name>
    <dbReference type="NCBI Taxonomy" id="190304"/>
    <lineage>
        <taxon>Bacteria</taxon>
        <taxon>Fusobacteriati</taxon>
        <taxon>Fusobacteriota</taxon>
        <taxon>Fusobacteriia</taxon>
        <taxon>Fusobacteriales</taxon>
        <taxon>Fusobacteriaceae</taxon>
        <taxon>Fusobacterium</taxon>
    </lineage>
</organism>
<name>ATPD_FUSNN</name>
<evidence type="ECO:0000255" key="1">
    <source>
        <dbReference type="HAMAP-Rule" id="MF_01416"/>
    </source>
</evidence>
<gene>
    <name evidence="1" type="primary">atpH</name>
    <name type="ordered locus">FN0361</name>
</gene>
<keyword id="KW-0066">ATP synthesis</keyword>
<keyword id="KW-0997">Cell inner membrane</keyword>
<keyword id="KW-1003">Cell membrane</keyword>
<keyword id="KW-0139">CF(1)</keyword>
<keyword id="KW-0375">Hydrogen ion transport</keyword>
<keyword id="KW-0406">Ion transport</keyword>
<keyword id="KW-0472">Membrane</keyword>
<keyword id="KW-1185">Reference proteome</keyword>
<keyword id="KW-0813">Transport</keyword>
<proteinExistence type="inferred from homology"/>